<gene>
    <name evidence="1" type="primary">bioD</name>
    <name type="ordered locus">CJJ81176_0330</name>
</gene>
<evidence type="ECO:0000255" key="1">
    <source>
        <dbReference type="HAMAP-Rule" id="MF_00336"/>
    </source>
</evidence>
<sequence>MQIYVSGIHTDVGKTHFSAAFCANFNYDYFKLIQAGTPTDSEFIAKFSPKTKIFKEGIFLQTPASPHLGKIKEKLDYKALDIILPKSKNLLIELAGGLFSPMDENYTMIDFVNIFKHPTILVAKYYLGSINHILLSIEALKQRNINLLALVMMGKKDILQDDFIKNYAKIPIINLDFFDENSILNKDFKEQMQEILQLKIP</sequence>
<organism>
    <name type="scientific">Campylobacter jejuni subsp. jejuni serotype O:23/36 (strain 81-176)</name>
    <dbReference type="NCBI Taxonomy" id="354242"/>
    <lineage>
        <taxon>Bacteria</taxon>
        <taxon>Pseudomonadati</taxon>
        <taxon>Campylobacterota</taxon>
        <taxon>Epsilonproteobacteria</taxon>
        <taxon>Campylobacterales</taxon>
        <taxon>Campylobacteraceae</taxon>
        <taxon>Campylobacter</taxon>
    </lineage>
</organism>
<keyword id="KW-0067">ATP-binding</keyword>
<keyword id="KW-0093">Biotin biosynthesis</keyword>
<keyword id="KW-0963">Cytoplasm</keyword>
<keyword id="KW-0436">Ligase</keyword>
<keyword id="KW-0460">Magnesium</keyword>
<keyword id="KW-0479">Metal-binding</keyword>
<keyword id="KW-0547">Nucleotide-binding</keyword>
<reference key="1">
    <citation type="submission" date="2006-12" db="EMBL/GenBank/DDBJ databases">
        <authorList>
            <person name="Fouts D.E."/>
            <person name="Nelson K.E."/>
            <person name="Sebastian Y."/>
        </authorList>
    </citation>
    <scope>NUCLEOTIDE SEQUENCE [LARGE SCALE GENOMIC DNA]</scope>
    <source>
        <strain>81-176</strain>
    </source>
</reference>
<proteinExistence type="inferred from homology"/>
<comment type="function">
    <text evidence="1">Catalyzes a mechanistically unusual reaction, the ATP-dependent insertion of CO2 between the N7 and N8 nitrogen atoms of 7,8-diaminopelargonic acid (DAPA, also called 7,8-diammoniononanoate) to form a ureido ring.</text>
</comment>
<comment type="catalytic activity">
    <reaction evidence="1">
        <text>(7R,8S)-7,8-diammoniononanoate + CO2 + ATP = (4R,5S)-dethiobiotin + ADP + phosphate + 3 H(+)</text>
        <dbReference type="Rhea" id="RHEA:15805"/>
        <dbReference type="ChEBI" id="CHEBI:15378"/>
        <dbReference type="ChEBI" id="CHEBI:16526"/>
        <dbReference type="ChEBI" id="CHEBI:30616"/>
        <dbReference type="ChEBI" id="CHEBI:43474"/>
        <dbReference type="ChEBI" id="CHEBI:149469"/>
        <dbReference type="ChEBI" id="CHEBI:149473"/>
        <dbReference type="ChEBI" id="CHEBI:456216"/>
        <dbReference type="EC" id="6.3.3.3"/>
    </reaction>
</comment>
<comment type="cofactor">
    <cofactor evidence="1">
        <name>Mg(2+)</name>
        <dbReference type="ChEBI" id="CHEBI:18420"/>
    </cofactor>
</comment>
<comment type="pathway">
    <text evidence="1">Cofactor biosynthesis; biotin biosynthesis; biotin from 7,8-diaminononanoate: step 1/2.</text>
</comment>
<comment type="subunit">
    <text evidence="1">Homodimer.</text>
</comment>
<comment type="subcellular location">
    <subcellularLocation>
        <location evidence="1">Cytoplasm</location>
    </subcellularLocation>
</comment>
<comment type="similarity">
    <text evidence="1">Belongs to the dethiobiotin synthetase family.</text>
</comment>
<name>BIOD_CAMJJ</name>
<protein>
    <recommendedName>
        <fullName evidence="1">ATP-dependent dethiobiotin synthetase BioD</fullName>
        <ecNumber evidence="1">6.3.3.3</ecNumber>
    </recommendedName>
    <alternativeName>
        <fullName evidence="1">DTB synthetase</fullName>
        <shortName evidence="1">DTBS</shortName>
    </alternativeName>
    <alternativeName>
        <fullName evidence="1">Dethiobiotin synthase</fullName>
    </alternativeName>
</protein>
<accession>A1VY27</accession>
<dbReference type="EC" id="6.3.3.3" evidence="1"/>
<dbReference type="EMBL" id="CP000538">
    <property type="protein sequence ID" value="EAQ73363.1"/>
    <property type="molecule type" value="Genomic_DNA"/>
</dbReference>
<dbReference type="RefSeq" id="WP_002816248.1">
    <property type="nucleotide sequence ID" value="NC_008787.1"/>
</dbReference>
<dbReference type="SMR" id="A1VY27"/>
<dbReference type="KEGG" id="cjj:CJJ81176_0330"/>
<dbReference type="eggNOG" id="COG0132">
    <property type="taxonomic scope" value="Bacteria"/>
</dbReference>
<dbReference type="HOGENOM" id="CLU_072551_2_0_7"/>
<dbReference type="UniPathway" id="UPA00078">
    <property type="reaction ID" value="UER00161"/>
</dbReference>
<dbReference type="Proteomes" id="UP000000646">
    <property type="component" value="Chromosome"/>
</dbReference>
<dbReference type="GO" id="GO:0005829">
    <property type="term" value="C:cytosol"/>
    <property type="evidence" value="ECO:0007669"/>
    <property type="project" value="TreeGrafter"/>
</dbReference>
<dbReference type="GO" id="GO:0005524">
    <property type="term" value="F:ATP binding"/>
    <property type="evidence" value="ECO:0007669"/>
    <property type="project" value="UniProtKB-UniRule"/>
</dbReference>
<dbReference type="GO" id="GO:0004141">
    <property type="term" value="F:dethiobiotin synthase activity"/>
    <property type="evidence" value="ECO:0007669"/>
    <property type="project" value="UniProtKB-UniRule"/>
</dbReference>
<dbReference type="GO" id="GO:0000287">
    <property type="term" value="F:magnesium ion binding"/>
    <property type="evidence" value="ECO:0007669"/>
    <property type="project" value="UniProtKB-UniRule"/>
</dbReference>
<dbReference type="GO" id="GO:0009102">
    <property type="term" value="P:biotin biosynthetic process"/>
    <property type="evidence" value="ECO:0007669"/>
    <property type="project" value="UniProtKB-UniRule"/>
</dbReference>
<dbReference type="CDD" id="cd03109">
    <property type="entry name" value="DTBS"/>
    <property type="match status" value="1"/>
</dbReference>
<dbReference type="Gene3D" id="3.40.50.300">
    <property type="entry name" value="P-loop containing nucleotide triphosphate hydrolases"/>
    <property type="match status" value="1"/>
</dbReference>
<dbReference type="HAMAP" id="MF_00336">
    <property type="entry name" value="BioD"/>
    <property type="match status" value="1"/>
</dbReference>
<dbReference type="InterPro" id="IPR004472">
    <property type="entry name" value="DTB_synth_BioD"/>
</dbReference>
<dbReference type="InterPro" id="IPR027417">
    <property type="entry name" value="P-loop_NTPase"/>
</dbReference>
<dbReference type="PANTHER" id="PTHR43210">
    <property type="entry name" value="DETHIOBIOTIN SYNTHETASE"/>
    <property type="match status" value="1"/>
</dbReference>
<dbReference type="PANTHER" id="PTHR43210:SF5">
    <property type="entry name" value="DETHIOBIOTIN SYNTHETASE"/>
    <property type="match status" value="1"/>
</dbReference>
<dbReference type="Pfam" id="PF13500">
    <property type="entry name" value="AAA_26"/>
    <property type="match status" value="1"/>
</dbReference>
<dbReference type="PIRSF" id="PIRSF006755">
    <property type="entry name" value="DTB_synth"/>
    <property type="match status" value="1"/>
</dbReference>
<dbReference type="SUPFAM" id="SSF52540">
    <property type="entry name" value="P-loop containing nucleoside triphosphate hydrolases"/>
    <property type="match status" value="1"/>
</dbReference>
<feature type="chain" id="PRO_0000302496" description="ATP-dependent dethiobiotin synthetase BioD">
    <location>
        <begin position="1"/>
        <end position="201"/>
    </location>
</feature>
<feature type="active site" evidence="1">
    <location>
        <position position="31"/>
    </location>
</feature>
<feature type="binding site" evidence="1">
    <location>
        <begin position="11"/>
        <end position="16"/>
    </location>
    <ligand>
        <name>ATP</name>
        <dbReference type="ChEBI" id="CHEBI:30616"/>
    </ligand>
</feature>
<feature type="binding site" evidence="1">
    <location>
        <position position="15"/>
    </location>
    <ligand>
        <name>Mg(2+)</name>
        <dbReference type="ChEBI" id="CHEBI:18420"/>
    </ligand>
</feature>
<feature type="binding site" evidence="1">
    <location>
        <position position="40"/>
    </location>
    <ligand>
        <name>ATP</name>
        <dbReference type="ChEBI" id="CHEBI:30616"/>
    </ligand>
</feature>
<feature type="binding site" evidence="1">
    <location>
        <position position="40"/>
    </location>
    <ligand>
        <name>Mg(2+)</name>
        <dbReference type="ChEBI" id="CHEBI:18420"/>
    </ligand>
</feature>
<feature type="binding site" evidence="1">
    <location>
        <begin position="93"/>
        <end position="96"/>
    </location>
    <ligand>
        <name>ATP</name>
        <dbReference type="ChEBI" id="CHEBI:30616"/>
    </ligand>
</feature>
<feature type="binding site" evidence="1">
    <location>
        <position position="93"/>
    </location>
    <ligand>
        <name>Mg(2+)</name>
        <dbReference type="ChEBI" id="CHEBI:18420"/>
    </ligand>
</feature>